<name>RL331_LISW6</name>
<dbReference type="EMBL" id="AM263198">
    <property type="protein sequence ID" value="CAK19625.1"/>
    <property type="molecule type" value="Genomic_DNA"/>
</dbReference>
<dbReference type="SMR" id="A0AF43"/>
<dbReference type="STRING" id="386043.lwe0207"/>
<dbReference type="KEGG" id="lwe:lwe0207"/>
<dbReference type="eggNOG" id="COG0267">
    <property type="taxonomic scope" value="Bacteria"/>
</dbReference>
<dbReference type="HOGENOM" id="CLU_190949_0_1_9"/>
<dbReference type="OrthoDB" id="9801333at2"/>
<dbReference type="Proteomes" id="UP000000779">
    <property type="component" value="Chromosome"/>
</dbReference>
<dbReference type="GO" id="GO:0005737">
    <property type="term" value="C:cytoplasm"/>
    <property type="evidence" value="ECO:0007669"/>
    <property type="project" value="UniProtKB-ARBA"/>
</dbReference>
<dbReference type="GO" id="GO:1990904">
    <property type="term" value="C:ribonucleoprotein complex"/>
    <property type="evidence" value="ECO:0007669"/>
    <property type="project" value="UniProtKB-KW"/>
</dbReference>
<dbReference type="GO" id="GO:0005840">
    <property type="term" value="C:ribosome"/>
    <property type="evidence" value="ECO:0007669"/>
    <property type="project" value="UniProtKB-KW"/>
</dbReference>
<dbReference type="GO" id="GO:0003735">
    <property type="term" value="F:structural constituent of ribosome"/>
    <property type="evidence" value="ECO:0007669"/>
    <property type="project" value="InterPro"/>
</dbReference>
<dbReference type="GO" id="GO:0006412">
    <property type="term" value="P:translation"/>
    <property type="evidence" value="ECO:0007669"/>
    <property type="project" value="UniProtKB-UniRule"/>
</dbReference>
<dbReference type="Gene3D" id="2.20.28.120">
    <property type="entry name" value="Ribosomal protein L33"/>
    <property type="match status" value="1"/>
</dbReference>
<dbReference type="HAMAP" id="MF_00294">
    <property type="entry name" value="Ribosomal_bL33"/>
    <property type="match status" value="1"/>
</dbReference>
<dbReference type="InterPro" id="IPR001705">
    <property type="entry name" value="Ribosomal_bL33"/>
</dbReference>
<dbReference type="InterPro" id="IPR038584">
    <property type="entry name" value="Ribosomal_bL33_sf"/>
</dbReference>
<dbReference type="InterPro" id="IPR011332">
    <property type="entry name" value="Ribosomal_zn-bd"/>
</dbReference>
<dbReference type="NCBIfam" id="NF001764">
    <property type="entry name" value="PRK00504.1"/>
    <property type="match status" value="1"/>
</dbReference>
<dbReference type="NCBIfam" id="TIGR01023">
    <property type="entry name" value="rpmG_bact"/>
    <property type="match status" value="1"/>
</dbReference>
<dbReference type="Pfam" id="PF00471">
    <property type="entry name" value="Ribosomal_L33"/>
    <property type="match status" value="1"/>
</dbReference>
<dbReference type="SUPFAM" id="SSF57829">
    <property type="entry name" value="Zn-binding ribosomal proteins"/>
    <property type="match status" value="1"/>
</dbReference>
<reference key="1">
    <citation type="journal article" date="2006" name="J. Bacteriol.">
        <title>Whole-genome sequence of Listeria welshimeri reveals common steps in genome reduction with Listeria innocua as compared to Listeria monocytogenes.</title>
        <authorList>
            <person name="Hain T."/>
            <person name="Steinweg C."/>
            <person name="Kuenne C.T."/>
            <person name="Billion A."/>
            <person name="Ghai R."/>
            <person name="Chatterjee S.S."/>
            <person name="Domann E."/>
            <person name="Kaerst U."/>
            <person name="Goesmann A."/>
            <person name="Bekel T."/>
            <person name="Bartels D."/>
            <person name="Kaiser O."/>
            <person name="Meyer F."/>
            <person name="Puehler A."/>
            <person name="Weisshaar B."/>
            <person name="Wehland J."/>
            <person name="Liang C."/>
            <person name="Dandekar T."/>
            <person name="Lampidis R."/>
            <person name="Kreft J."/>
            <person name="Goebel W."/>
            <person name="Chakraborty T."/>
        </authorList>
    </citation>
    <scope>NUCLEOTIDE SEQUENCE [LARGE SCALE GENOMIC DNA]</scope>
    <source>
        <strain>ATCC 35897 / DSM 20650 / CCUG 15529 / CIP 8149 / NCTC 11857 / SLCC 5334 / V8</strain>
    </source>
</reference>
<organism>
    <name type="scientific">Listeria welshimeri serovar 6b (strain ATCC 35897 / DSM 20650 / CCUG 15529 / CIP 8149 / NCTC 11857 / SLCC 5334 / V8)</name>
    <dbReference type="NCBI Taxonomy" id="386043"/>
    <lineage>
        <taxon>Bacteria</taxon>
        <taxon>Bacillati</taxon>
        <taxon>Bacillota</taxon>
        <taxon>Bacilli</taxon>
        <taxon>Bacillales</taxon>
        <taxon>Listeriaceae</taxon>
        <taxon>Listeria</taxon>
    </lineage>
</organism>
<feature type="chain" id="PRO_0000356530" description="Large ribosomal subunit protein bL33A">
    <location>
        <begin position="1"/>
        <end position="49"/>
    </location>
</feature>
<gene>
    <name evidence="1" type="primary">rpmG1</name>
    <name type="ordered locus">lwe0207</name>
</gene>
<proteinExistence type="inferred from homology"/>
<protein>
    <recommendedName>
        <fullName evidence="1">Large ribosomal subunit protein bL33A</fullName>
    </recommendedName>
    <alternativeName>
        <fullName evidence="1">50S ribosomal protein L33 1</fullName>
    </alternativeName>
</protein>
<sequence length="49" mass="5698">MKKKTSLACSECGSRNYTVNVSGTQKETRLEVKKFCRHCNKHTLHRETK</sequence>
<comment type="similarity">
    <text evidence="1">Belongs to the bacterial ribosomal protein bL33 family.</text>
</comment>
<accession>A0AF43</accession>
<keyword id="KW-0687">Ribonucleoprotein</keyword>
<keyword id="KW-0689">Ribosomal protein</keyword>
<evidence type="ECO:0000255" key="1">
    <source>
        <dbReference type="HAMAP-Rule" id="MF_00294"/>
    </source>
</evidence>